<protein>
    <recommendedName>
        <fullName>Myelin proteolipid protein</fullName>
        <shortName>PLP</shortName>
    </recommendedName>
    <alternativeName>
        <fullName>DM20</fullName>
    </alternativeName>
    <alternativeName>
        <fullName>Lipophilin</fullName>
    </alternativeName>
</protein>
<proteinExistence type="evidence at transcript level"/>
<evidence type="ECO:0000250" key="1"/>
<evidence type="ECO:0000255" key="2"/>
<evidence type="ECO:0000269" key="3">
    <source>
    </source>
</evidence>
<evidence type="ECO:0000305" key="4"/>
<dbReference type="EMBL" id="U21686">
    <property type="protein sequence ID" value="AAB39006.1"/>
    <property type="molecule type" value="mRNA"/>
</dbReference>
<dbReference type="RefSeq" id="NP_001118173.1">
    <property type="nucleotide sequence ID" value="NM_001124701.1"/>
</dbReference>
<dbReference type="GeneID" id="100136749"/>
<dbReference type="KEGG" id="omy:100136749"/>
<dbReference type="CTD" id="3772382"/>
<dbReference type="OrthoDB" id="9993736at2759"/>
<dbReference type="Proteomes" id="UP000694395">
    <property type="component" value="Unplaced"/>
</dbReference>
<dbReference type="GO" id="GO:0043209">
    <property type="term" value="C:myelin sheath"/>
    <property type="evidence" value="ECO:0007669"/>
    <property type="project" value="TreeGrafter"/>
</dbReference>
<dbReference type="GO" id="GO:0005886">
    <property type="term" value="C:plasma membrane"/>
    <property type="evidence" value="ECO:0000250"/>
    <property type="project" value="UniProtKB"/>
</dbReference>
<dbReference type="GO" id="GO:0019911">
    <property type="term" value="F:structural constituent of myelin sheath"/>
    <property type="evidence" value="ECO:0007669"/>
    <property type="project" value="TreeGrafter"/>
</dbReference>
<dbReference type="GO" id="GO:0061564">
    <property type="term" value="P:axon development"/>
    <property type="evidence" value="ECO:0007669"/>
    <property type="project" value="TreeGrafter"/>
</dbReference>
<dbReference type="GO" id="GO:0022010">
    <property type="term" value="P:central nervous system myelination"/>
    <property type="evidence" value="ECO:0007669"/>
    <property type="project" value="TreeGrafter"/>
</dbReference>
<dbReference type="InterPro" id="IPR001614">
    <property type="entry name" value="Myelin_PLP"/>
</dbReference>
<dbReference type="InterPro" id="IPR018237">
    <property type="entry name" value="Myelin_PLP_CS"/>
</dbReference>
<dbReference type="PANTHER" id="PTHR11683">
    <property type="entry name" value="MYELIN PROTEOLIPID"/>
    <property type="match status" value="1"/>
</dbReference>
<dbReference type="PANTHER" id="PTHR11683:SF15">
    <property type="entry name" value="PROTEOLIPID PROTEIN 1B ISOFORM X1"/>
    <property type="match status" value="1"/>
</dbReference>
<dbReference type="Pfam" id="PF01275">
    <property type="entry name" value="Myelin_PLP"/>
    <property type="match status" value="1"/>
</dbReference>
<dbReference type="PRINTS" id="PR00214">
    <property type="entry name" value="MYELINPLP"/>
</dbReference>
<dbReference type="SMART" id="SM00002">
    <property type="entry name" value="PLP"/>
    <property type="match status" value="1"/>
</dbReference>
<dbReference type="PROSITE" id="PS00575">
    <property type="entry name" value="MYELIN_PLP_1"/>
    <property type="match status" value="1"/>
</dbReference>
<dbReference type="PROSITE" id="PS01004">
    <property type="entry name" value="MYELIN_PLP_2"/>
    <property type="match status" value="1"/>
</dbReference>
<reference key="1">
    <citation type="journal article" date="1996" name="Brain Res. Mol. Brain Res.">
        <title>Cloning and expression of the proteolipid protein DM20 cDNA from the brain of the rainbow trout, Oncorhynchus mykiss.</title>
        <authorList>
            <person name="Tang S."/>
            <person name="Panno J.P."/>
            <person name="McKeown B.A."/>
        </authorList>
    </citation>
    <scope>NUCLEOTIDE SEQUENCE [MRNA]</scope>
    <scope>TISSUE SPECIFICITY</scope>
    <scope>DEVELOPMENTAL STAGE</scope>
    <source>
        <tissue>Brain</tissue>
    </source>
</reference>
<feature type="chain" id="PRO_0000159014" description="Myelin proteolipid protein">
    <location>
        <begin position="1"/>
        <end position="258"/>
    </location>
</feature>
<feature type="topological domain" description="Cytoplasmic" evidence="2">
    <location>
        <begin position="1"/>
        <end position="22"/>
    </location>
</feature>
<feature type="transmembrane region" description="Helical; Name=1" evidence="2">
    <location>
        <begin position="23"/>
        <end position="48"/>
    </location>
</feature>
<feature type="topological domain" description="Extracellular" evidence="2">
    <location>
        <begin position="49"/>
        <end position="82"/>
    </location>
</feature>
<feature type="transmembrane region" description="Helical; Name=2" evidence="2">
    <location>
        <begin position="83"/>
        <end position="103"/>
    </location>
</feature>
<feature type="topological domain" description="Cytoplasmic" evidence="2">
    <location>
        <begin position="104"/>
        <end position="128"/>
    </location>
</feature>
<feature type="transmembrane region" description="Helical; Name=3" evidence="2">
    <location>
        <begin position="129"/>
        <end position="149"/>
    </location>
</feature>
<feature type="topological domain" description="Extracellular" evidence="2">
    <location>
        <begin position="150"/>
        <end position="218"/>
    </location>
</feature>
<feature type="transmembrane region" description="Helical; Name=4" evidence="2">
    <location>
        <begin position="219"/>
        <end position="239"/>
    </location>
</feature>
<feature type="topological domain" description="Cytoplasmic" evidence="2">
    <location>
        <begin position="240"/>
        <end position="258"/>
    </location>
</feature>
<feature type="lipid moiety-binding region" description="S-palmitoyl cysteine" evidence="1">
    <location>
        <position position="18"/>
    </location>
</feature>
<feature type="lipid moiety-binding region" description="S-palmitoyl cysteine" evidence="1">
    <location>
        <position position="19"/>
    </location>
</feature>
<feature type="lipid moiety-binding region" description="S-palmitoyl cysteine" evidence="1">
    <location>
        <position position="22"/>
    </location>
</feature>
<feature type="lipid moiety-binding region" description="S-palmitoyl cysteine" evidence="1">
    <location>
        <position position="121"/>
    </location>
</feature>
<feature type="lipid moiety-binding region" description="S-palmitoyl cysteine" evidence="1">
    <location>
        <position position="124"/>
    </location>
</feature>
<feature type="disulfide bond" evidence="1">
    <location>
        <begin position="181"/>
        <end position="200"/>
    </location>
</feature>
<name>MYPR_ONCMY</name>
<comment type="function">
    <text>This is the major myelin protein from the central nervous system. It plays an important role in the formation or maintenance of the multilamellar structure of myelin. May be involved in neuron and glial cell differentiation.</text>
</comment>
<comment type="subcellular location">
    <subcellularLocation>
        <location evidence="1">Cell membrane</location>
        <topology evidence="1">Multi-pass membrane protein</topology>
    </subcellularLocation>
</comment>
<comment type="tissue specificity">
    <text evidence="3">Central nervous system. Highest levels in spinal cord and medulla oblongata.</text>
</comment>
<comment type="developmental stage">
    <text evidence="3">First expressed at hatching day, levels rapidly increase during the early postnatal period reaching a maximum by the 9th week. High levels are maintained in adults.</text>
</comment>
<comment type="similarity">
    <text evidence="4">Belongs to the myelin proteolipid protein family.</text>
</comment>
<sequence length="258" mass="28782">MFPVRHALLCKALGCYDCCIRCLGAVPYPSLVSTLLCFTGMALFCGCGHEALAHTEVLVETYFVRNIQDYVILASFIKYFQYVIYGLASFFFLYCILLLAEGFYTTSAVKQTFGEFRSTRCGRCLSLTFIIVTYVLAVIWLAVFAFTAIPSSSSLIWHRPATTSTSWTETTPSINQHGWICMDARQYGLLPWNAMPGKACGMTLASICKTKEFFVTYDLYIAAFAGAGIALLALFLYVVATTYNYAVLRFLGRKGLRC</sequence>
<gene>
    <name type="primary">plp</name>
</gene>
<organism>
    <name type="scientific">Oncorhynchus mykiss</name>
    <name type="common">Rainbow trout</name>
    <name type="synonym">Salmo gairdneri</name>
    <dbReference type="NCBI Taxonomy" id="8022"/>
    <lineage>
        <taxon>Eukaryota</taxon>
        <taxon>Metazoa</taxon>
        <taxon>Chordata</taxon>
        <taxon>Craniata</taxon>
        <taxon>Vertebrata</taxon>
        <taxon>Euteleostomi</taxon>
        <taxon>Actinopterygii</taxon>
        <taxon>Neopterygii</taxon>
        <taxon>Teleostei</taxon>
        <taxon>Protacanthopterygii</taxon>
        <taxon>Salmoniformes</taxon>
        <taxon>Salmonidae</taxon>
        <taxon>Salmoninae</taxon>
        <taxon>Oncorhynchus</taxon>
    </lineage>
</organism>
<accession>P79826</accession>
<keyword id="KW-1003">Cell membrane</keyword>
<keyword id="KW-1015">Disulfide bond</keyword>
<keyword id="KW-0449">Lipoprotein</keyword>
<keyword id="KW-0472">Membrane</keyword>
<keyword id="KW-0564">Palmitate</keyword>
<keyword id="KW-0812">Transmembrane</keyword>
<keyword id="KW-1133">Transmembrane helix</keyword>